<feature type="chain" id="PRO_0000182348" description="Transcriptional repressor NrdR">
    <location>
        <begin position="1"/>
        <end position="156"/>
    </location>
</feature>
<feature type="domain" description="ATP-cone" evidence="1">
    <location>
        <begin position="49"/>
        <end position="139"/>
    </location>
</feature>
<feature type="zinc finger region" evidence="1">
    <location>
        <begin position="3"/>
        <end position="34"/>
    </location>
</feature>
<evidence type="ECO:0000255" key="1">
    <source>
        <dbReference type="HAMAP-Rule" id="MF_00440"/>
    </source>
</evidence>
<name>NRDR_STAAS</name>
<protein>
    <recommendedName>
        <fullName evidence="1">Transcriptional repressor NrdR</fullName>
    </recommendedName>
</protein>
<sequence length="156" mass="18204">MKCPKCNSTQSKVVDSRHADELNAIRRRRECENCGTRFTTFEHIEVSQLIVVKKDGTREQFSREKILNGLVRSCEKRPVRYQQLEDITNKVEWQLRDEGHTEVSSRDIGEHVMNLLMHVDQVSYVRFASVYKEFKDVDQLLASMQGILSENKRSDA</sequence>
<proteinExistence type="inferred from homology"/>
<keyword id="KW-0067">ATP-binding</keyword>
<keyword id="KW-0238">DNA-binding</keyword>
<keyword id="KW-0479">Metal-binding</keyword>
<keyword id="KW-0547">Nucleotide-binding</keyword>
<keyword id="KW-0678">Repressor</keyword>
<keyword id="KW-0804">Transcription</keyword>
<keyword id="KW-0805">Transcription regulation</keyword>
<keyword id="KW-0862">Zinc</keyword>
<keyword id="KW-0863">Zinc-finger</keyword>
<accession>Q6G8P0</accession>
<gene>
    <name evidence="1" type="primary">nrdR</name>
    <name type="ordered locus">SAS1614</name>
</gene>
<reference key="1">
    <citation type="journal article" date="2004" name="Proc. Natl. Acad. Sci. U.S.A.">
        <title>Complete genomes of two clinical Staphylococcus aureus strains: evidence for the rapid evolution of virulence and drug resistance.</title>
        <authorList>
            <person name="Holden M.T.G."/>
            <person name="Feil E.J."/>
            <person name="Lindsay J.A."/>
            <person name="Peacock S.J."/>
            <person name="Day N.P.J."/>
            <person name="Enright M.C."/>
            <person name="Foster T.J."/>
            <person name="Moore C.E."/>
            <person name="Hurst L."/>
            <person name="Atkin R."/>
            <person name="Barron A."/>
            <person name="Bason N."/>
            <person name="Bentley S.D."/>
            <person name="Chillingworth C."/>
            <person name="Chillingworth T."/>
            <person name="Churcher C."/>
            <person name="Clark L."/>
            <person name="Corton C."/>
            <person name="Cronin A."/>
            <person name="Doggett J."/>
            <person name="Dowd L."/>
            <person name="Feltwell T."/>
            <person name="Hance Z."/>
            <person name="Harris B."/>
            <person name="Hauser H."/>
            <person name="Holroyd S."/>
            <person name="Jagels K."/>
            <person name="James K.D."/>
            <person name="Lennard N."/>
            <person name="Line A."/>
            <person name="Mayes R."/>
            <person name="Moule S."/>
            <person name="Mungall K."/>
            <person name="Ormond D."/>
            <person name="Quail M.A."/>
            <person name="Rabbinowitsch E."/>
            <person name="Rutherford K.M."/>
            <person name="Sanders M."/>
            <person name="Sharp S."/>
            <person name="Simmonds M."/>
            <person name="Stevens K."/>
            <person name="Whitehead S."/>
            <person name="Barrell B.G."/>
            <person name="Spratt B.G."/>
            <person name="Parkhill J."/>
        </authorList>
    </citation>
    <scope>NUCLEOTIDE SEQUENCE [LARGE SCALE GENOMIC DNA]</scope>
    <source>
        <strain>MSSA476</strain>
    </source>
</reference>
<comment type="function">
    <text evidence="1">Negatively regulates transcription of bacterial ribonucleotide reductase nrd genes and operons by binding to NrdR-boxes.</text>
</comment>
<comment type="cofactor">
    <cofactor evidence="1">
        <name>Zn(2+)</name>
        <dbReference type="ChEBI" id="CHEBI:29105"/>
    </cofactor>
    <text evidence="1">Binds 1 zinc ion.</text>
</comment>
<comment type="similarity">
    <text evidence="1">Belongs to the NrdR family.</text>
</comment>
<organism>
    <name type="scientific">Staphylococcus aureus (strain MSSA476)</name>
    <dbReference type="NCBI Taxonomy" id="282459"/>
    <lineage>
        <taxon>Bacteria</taxon>
        <taxon>Bacillati</taxon>
        <taxon>Bacillota</taxon>
        <taxon>Bacilli</taxon>
        <taxon>Bacillales</taxon>
        <taxon>Staphylococcaceae</taxon>
        <taxon>Staphylococcus</taxon>
    </lineage>
</organism>
<dbReference type="EMBL" id="BX571857">
    <property type="protein sequence ID" value="CAG43416.1"/>
    <property type="molecule type" value="Genomic_DNA"/>
</dbReference>
<dbReference type="RefSeq" id="WP_000650082.1">
    <property type="nucleotide sequence ID" value="NC_002953.3"/>
</dbReference>
<dbReference type="SMR" id="Q6G8P0"/>
<dbReference type="GeneID" id="66839865"/>
<dbReference type="KEGG" id="sas:SAS1614"/>
<dbReference type="HOGENOM" id="CLU_108412_0_0_9"/>
<dbReference type="GO" id="GO:0005524">
    <property type="term" value="F:ATP binding"/>
    <property type="evidence" value="ECO:0007669"/>
    <property type="project" value="UniProtKB-KW"/>
</dbReference>
<dbReference type="GO" id="GO:0003677">
    <property type="term" value="F:DNA binding"/>
    <property type="evidence" value="ECO:0007669"/>
    <property type="project" value="UniProtKB-KW"/>
</dbReference>
<dbReference type="GO" id="GO:0008270">
    <property type="term" value="F:zinc ion binding"/>
    <property type="evidence" value="ECO:0007669"/>
    <property type="project" value="UniProtKB-UniRule"/>
</dbReference>
<dbReference type="GO" id="GO:0045892">
    <property type="term" value="P:negative regulation of DNA-templated transcription"/>
    <property type="evidence" value="ECO:0007669"/>
    <property type="project" value="UniProtKB-UniRule"/>
</dbReference>
<dbReference type="HAMAP" id="MF_00440">
    <property type="entry name" value="NrdR"/>
    <property type="match status" value="1"/>
</dbReference>
<dbReference type="InterPro" id="IPR005144">
    <property type="entry name" value="ATP-cone_dom"/>
</dbReference>
<dbReference type="InterPro" id="IPR055173">
    <property type="entry name" value="NrdR-like_N"/>
</dbReference>
<dbReference type="InterPro" id="IPR003796">
    <property type="entry name" value="RNR_NrdR-like"/>
</dbReference>
<dbReference type="NCBIfam" id="TIGR00244">
    <property type="entry name" value="transcriptional regulator NrdR"/>
    <property type="match status" value="1"/>
</dbReference>
<dbReference type="PANTHER" id="PTHR30455">
    <property type="entry name" value="TRANSCRIPTIONAL REPRESSOR NRDR"/>
    <property type="match status" value="1"/>
</dbReference>
<dbReference type="PANTHER" id="PTHR30455:SF2">
    <property type="entry name" value="TRANSCRIPTIONAL REPRESSOR NRDR"/>
    <property type="match status" value="1"/>
</dbReference>
<dbReference type="Pfam" id="PF03477">
    <property type="entry name" value="ATP-cone"/>
    <property type="match status" value="1"/>
</dbReference>
<dbReference type="Pfam" id="PF22811">
    <property type="entry name" value="Zn_ribbon_NrdR"/>
    <property type="match status" value="1"/>
</dbReference>
<dbReference type="PROSITE" id="PS51161">
    <property type="entry name" value="ATP_CONE"/>
    <property type="match status" value="1"/>
</dbReference>